<proteinExistence type="evidence at transcript level"/>
<protein>
    <recommendedName>
        <fullName>Thyroxine-binding globulin</fullName>
    </recommendedName>
    <alternativeName>
        <fullName>Serpin A7</fullName>
    </alternativeName>
    <alternativeName>
        <fullName>T4-binding globulin</fullName>
    </alternativeName>
</protein>
<evidence type="ECO:0000250" key="1"/>
<evidence type="ECO:0000255" key="2"/>
<evidence type="ECO:0000305" key="3"/>
<accession>P61939</accession>
<accession>A2RSG7</accession>
<comment type="function">
    <text evidence="1">Major thyroid hormone transport protein in serum.</text>
</comment>
<comment type="subcellular location">
    <subcellularLocation>
        <location evidence="1">Secreted</location>
    </subcellularLocation>
</comment>
<comment type="similarity">
    <text evidence="3">Belongs to the serpin family.</text>
</comment>
<name>THBG_MOUSE</name>
<organism>
    <name type="scientific">Mus musculus</name>
    <name type="common">Mouse</name>
    <dbReference type="NCBI Taxonomy" id="10090"/>
    <lineage>
        <taxon>Eukaryota</taxon>
        <taxon>Metazoa</taxon>
        <taxon>Chordata</taxon>
        <taxon>Craniata</taxon>
        <taxon>Vertebrata</taxon>
        <taxon>Euteleostomi</taxon>
        <taxon>Mammalia</taxon>
        <taxon>Eutheria</taxon>
        <taxon>Euarchontoglires</taxon>
        <taxon>Glires</taxon>
        <taxon>Rodentia</taxon>
        <taxon>Myomorpha</taxon>
        <taxon>Muroidea</taxon>
        <taxon>Muridae</taxon>
        <taxon>Murinae</taxon>
        <taxon>Mus</taxon>
        <taxon>Mus</taxon>
    </lineage>
</organism>
<dbReference type="EMBL" id="AY575783">
    <property type="protein sequence ID" value="AAS88726.1"/>
    <property type="molecule type" value="mRNA"/>
</dbReference>
<dbReference type="EMBL" id="BC132100">
    <property type="protein sequence ID" value="AAI32101.1"/>
    <property type="molecule type" value="mRNA"/>
</dbReference>
<dbReference type="RefSeq" id="NP_001369300.1">
    <property type="nucleotide sequence ID" value="NM_001382371.1"/>
</dbReference>
<dbReference type="RefSeq" id="NP_001369301.1">
    <property type="nucleotide sequence ID" value="NM_001382372.1"/>
</dbReference>
<dbReference type="RefSeq" id="XP_006528641.1">
    <property type="nucleotide sequence ID" value="XM_006528578.3"/>
</dbReference>
<dbReference type="SMR" id="P61939"/>
<dbReference type="BioGRID" id="237113">
    <property type="interactions" value="3"/>
</dbReference>
<dbReference type="FunCoup" id="P61939">
    <property type="interactions" value="284"/>
</dbReference>
<dbReference type="STRING" id="10090.ENSMUSP00000033626"/>
<dbReference type="MEROPS" id="I04.955"/>
<dbReference type="GlyCosmos" id="P61939">
    <property type="glycosylation" value="6 sites, No reported glycans"/>
</dbReference>
<dbReference type="GlyGen" id="P61939">
    <property type="glycosylation" value="6 sites"/>
</dbReference>
<dbReference type="iPTMnet" id="P61939"/>
<dbReference type="PhosphoSitePlus" id="P61939"/>
<dbReference type="CPTAC" id="non-CPTAC-3620"/>
<dbReference type="PaxDb" id="10090-ENSMUSP00000033626"/>
<dbReference type="PeptideAtlas" id="P61939"/>
<dbReference type="ProteomicsDB" id="262774"/>
<dbReference type="DNASU" id="331535"/>
<dbReference type="GeneID" id="331535"/>
<dbReference type="UCSC" id="uc009uka.2">
    <property type="organism name" value="mouse"/>
</dbReference>
<dbReference type="AGR" id="MGI:3041197"/>
<dbReference type="MGI" id="MGI:3041197">
    <property type="gene designation" value="Serpina7"/>
</dbReference>
<dbReference type="eggNOG" id="KOG2392">
    <property type="taxonomic scope" value="Eukaryota"/>
</dbReference>
<dbReference type="InParanoid" id="P61939"/>
<dbReference type="BioGRID-ORCS" id="331535">
    <property type="hits" value="1 hit in 78 CRISPR screens"/>
</dbReference>
<dbReference type="PRO" id="PR:P61939"/>
<dbReference type="Proteomes" id="UP000000589">
    <property type="component" value="Unplaced"/>
</dbReference>
<dbReference type="RNAct" id="P61939">
    <property type="molecule type" value="protein"/>
</dbReference>
<dbReference type="GO" id="GO:0005615">
    <property type="term" value="C:extracellular space"/>
    <property type="evidence" value="ECO:0007669"/>
    <property type="project" value="InterPro"/>
</dbReference>
<dbReference type="GO" id="GO:0004867">
    <property type="term" value="F:serine-type endopeptidase inhibitor activity"/>
    <property type="evidence" value="ECO:0007669"/>
    <property type="project" value="InterPro"/>
</dbReference>
<dbReference type="CDD" id="cd19555">
    <property type="entry name" value="serpinA7_TBG"/>
    <property type="match status" value="1"/>
</dbReference>
<dbReference type="FunFam" id="2.30.39.10:FF:000003">
    <property type="entry name" value="alpha-1-antitrypsin isoform X1"/>
    <property type="match status" value="1"/>
</dbReference>
<dbReference type="FunFam" id="3.30.497.10:FF:000001">
    <property type="entry name" value="Serine protease inhibitor"/>
    <property type="match status" value="1"/>
</dbReference>
<dbReference type="FunFam" id="2.10.310.10:FF:000001">
    <property type="entry name" value="Serpin family A member 1"/>
    <property type="match status" value="1"/>
</dbReference>
<dbReference type="Gene3D" id="2.30.39.10">
    <property type="entry name" value="Alpha-1-antitrypsin, domain 1"/>
    <property type="match status" value="1"/>
</dbReference>
<dbReference type="Gene3D" id="3.30.497.10">
    <property type="entry name" value="Antithrombin, subunit I, domain 2"/>
    <property type="match status" value="1"/>
</dbReference>
<dbReference type="Gene3D" id="2.10.310.10">
    <property type="entry name" value="Serpins superfamily"/>
    <property type="match status" value="1"/>
</dbReference>
<dbReference type="InterPro" id="IPR023796">
    <property type="entry name" value="Serpin_dom"/>
</dbReference>
<dbReference type="InterPro" id="IPR000215">
    <property type="entry name" value="Serpin_fam"/>
</dbReference>
<dbReference type="InterPro" id="IPR036186">
    <property type="entry name" value="Serpin_sf"/>
</dbReference>
<dbReference type="InterPro" id="IPR042178">
    <property type="entry name" value="Serpin_sf_1"/>
</dbReference>
<dbReference type="InterPro" id="IPR042185">
    <property type="entry name" value="Serpin_sf_2"/>
</dbReference>
<dbReference type="PANTHER" id="PTHR11461">
    <property type="entry name" value="SERINE PROTEASE INHIBITOR, SERPIN"/>
    <property type="match status" value="1"/>
</dbReference>
<dbReference type="PANTHER" id="PTHR11461:SF375">
    <property type="entry name" value="THYROXINE-BINDING GLOBULIN"/>
    <property type="match status" value="1"/>
</dbReference>
<dbReference type="Pfam" id="PF00079">
    <property type="entry name" value="Serpin"/>
    <property type="match status" value="1"/>
</dbReference>
<dbReference type="SMART" id="SM00093">
    <property type="entry name" value="SERPIN"/>
    <property type="match status" value="1"/>
</dbReference>
<dbReference type="SUPFAM" id="SSF56574">
    <property type="entry name" value="Serpins"/>
    <property type="match status" value="1"/>
</dbReference>
<feature type="signal peptide" evidence="1">
    <location>
        <begin position="1"/>
        <end position="20"/>
    </location>
</feature>
<feature type="chain" id="PRO_0000032437" description="Thyroxine-binding globulin">
    <location>
        <begin position="21"/>
        <end position="418"/>
    </location>
</feature>
<feature type="binding site" evidence="1">
    <location>
        <position position="296"/>
    </location>
    <ligand>
        <name>thyroxine</name>
        <dbReference type="ChEBI" id="CHEBI:305790"/>
    </ligand>
</feature>
<feature type="binding site" evidence="1">
    <location>
        <position position="401"/>
    </location>
    <ligand>
        <name>thyroxine</name>
        <dbReference type="ChEBI" id="CHEBI:305790"/>
    </ligand>
</feature>
<feature type="glycosylation site" description="N-linked (GlcNAc...) asparagine" evidence="2">
    <location>
        <position position="24"/>
    </location>
</feature>
<feature type="glycosylation site" description="N-linked (GlcNAc...) asparagine" evidence="2">
    <location>
        <position position="39"/>
    </location>
</feature>
<feature type="glycosylation site" description="N-linked (GlcNAc...) asparagine" evidence="2">
    <location>
        <position position="102"/>
    </location>
</feature>
<feature type="glycosylation site" description="N-linked (GlcNAc...) asparagine" evidence="2">
    <location>
        <position position="168"/>
    </location>
</feature>
<feature type="glycosylation site" description="N-linked (GlcNAc...) asparagine" evidence="2">
    <location>
        <position position="227"/>
    </location>
</feature>
<feature type="glycosylation site" description="N-linked (GlcNAc...) asparagine" evidence="2">
    <location>
        <position position="256"/>
    </location>
</feature>
<gene>
    <name type="primary">Serpina7</name>
    <name type="synonym">Tbg</name>
</gene>
<reference key="1">
    <citation type="submission" date="2004-03" db="EMBL/GenBank/DDBJ databases">
        <authorList>
            <person name="Moeller L.C."/>
            <person name="Liao X."/>
            <person name="Dumitrescu A.M."/>
            <person name="Rietz C."/>
            <person name="Weiss R.E."/>
            <person name="Janssen O.E."/>
            <person name="Refetoff S."/>
        </authorList>
    </citation>
    <scope>NUCLEOTIDE SEQUENCE [MRNA]</scope>
    <source>
        <strain>C57BL/6J</strain>
        <tissue>Liver</tissue>
    </source>
</reference>
<reference key="2">
    <citation type="journal article" date="2004" name="Genome Res.">
        <title>The status, quality, and expansion of the NIH full-length cDNA project: the Mammalian Gene Collection (MGC).</title>
        <authorList>
            <consortium name="The MGC Project Team"/>
        </authorList>
    </citation>
    <scope>NUCLEOTIDE SEQUENCE [LARGE SCALE MRNA]</scope>
    <source>
        <tissue>Brain</tissue>
    </source>
</reference>
<keyword id="KW-0325">Glycoprotein</keyword>
<keyword id="KW-1185">Reference proteome</keyword>
<keyword id="KW-0964">Secreted</keyword>
<keyword id="KW-0732">Signal</keyword>
<sequence>MSVFFYLFVLVFGLQATIHCAPHNSSEGKVTTCHLPQQNATLYKMPSINADFAFSLYRRLSVENPDLNIFFSPVSISVALAMLSFGSGSSTQTQILEVLGFNLTDTPVTELQQGFQHLICSLNFPKNELELQMGNAVFIGQQLKPLAKFLDDVKTLYETEVFSTDFSNVSAAQHKINSYVEKQTKGKIVGLIQGLKLNIIMILVNYIHFRAQWANPFRVSKTEESSNFSVDKSTTVQVPMMHQLEQYYHYVDMELNCTVLQMDYSENALALFVLPKEGHMEWVEAAMSSKTLKKWNYLLQKGWVELFVPKFSISATYDLGSTLQKMGMRDAFAESADFPGITEDSGLKLSYAFHKAVLHIGEEGTKEGASPEVGSLDQQEVPPLHPVIRLDRAFLLMILEKRTRSVLFLGKLVNPTKQ</sequence>